<reference key="1">
    <citation type="journal article" date="2005" name="PLoS Biol.">
        <title>Major structural differences and novel potential virulence mechanisms from the genomes of multiple Campylobacter species.</title>
        <authorList>
            <person name="Fouts D.E."/>
            <person name="Mongodin E.F."/>
            <person name="Mandrell R.E."/>
            <person name="Miller W.G."/>
            <person name="Rasko D.A."/>
            <person name="Ravel J."/>
            <person name="Brinkac L.M."/>
            <person name="DeBoy R.T."/>
            <person name="Parker C.T."/>
            <person name="Daugherty S.C."/>
            <person name="Dodson R.J."/>
            <person name="Durkin A.S."/>
            <person name="Madupu R."/>
            <person name="Sullivan S.A."/>
            <person name="Shetty J.U."/>
            <person name="Ayodeji M.A."/>
            <person name="Shvartsbeyn A."/>
            <person name="Schatz M.C."/>
            <person name="Badger J.H."/>
            <person name="Fraser C.M."/>
            <person name="Nelson K.E."/>
        </authorList>
    </citation>
    <scope>NUCLEOTIDE SEQUENCE [LARGE SCALE GENOMIC DNA]</scope>
    <source>
        <strain>RM1221</strain>
    </source>
</reference>
<protein>
    <recommendedName>
        <fullName evidence="1">Beta-ketoacyl-[acyl-carrier-protein] synthase III</fullName>
        <shortName evidence="1">Beta-ketoacyl-ACP synthase III</shortName>
        <shortName evidence="1">KAS III</shortName>
        <ecNumber evidence="1">2.3.1.180</ecNumber>
    </recommendedName>
    <alternativeName>
        <fullName evidence="1">3-oxoacyl-[acyl-carrier-protein] synthase 3</fullName>
    </alternativeName>
    <alternativeName>
        <fullName evidence="1">3-oxoacyl-[acyl-carrier-protein] synthase III</fullName>
    </alternativeName>
</protein>
<accession>Q5HWE3</accession>
<organism>
    <name type="scientific">Campylobacter jejuni (strain RM1221)</name>
    <dbReference type="NCBI Taxonomy" id="195099"/>
    <lineage>
        <taxon>Bacteria</taxon>
        <taxon>Pseudomonadati</taxon>
        <taxon>Campylobacterota</taxon>
        <taxon>Epsilonproteobacteria</taxon>
        <taxon>Campylobacterales</taxon>
        <taxon>Campylobacteraceae</taxon>
        <taxon>Campylobacter</taxon>
    </lineage>
</organism>
<gene>
    <name evidence="1" type="primary">fabH</name>
    <name type="ordered locus">CJE0373</name>
</gene>
<keyword id="KW-0012">Acyltransferase</keyword>
<keyword id="KW-0963">Cytoplasm</keyword>
<keyword id="KW-0275">Fatty acid biosynthesis</keyword>
<keyword id="KW-0276">Fatty acid metabolism</keyword>
<keyword id="KW-0444">Lipid biosynthesis</keyword>
<keyword id="KW-0443">Lipid metabolism</keyword>
<keyword id="KW-0511">Multifunctional enzyme</keyword>
<keyword id="KW-0808">Transferase</keyword>
<sequence>MLKAGLKSIASYIPEKILSNADLEKIVDTTDEWITRRTGIKERRIASENENSSDLGTKAALKAIERANLKPEDIDAILVATLSPDYFTMPSTACKIASNLGLVNISAFDISAACSGFIYLLEQAKALVESGLKKNVLIVGAEKTSSIMDYNDRSICILFGDGAGAGVVSLDNENHILDVHTASNGNYGDLLMTQRSQKSSLCQTLSMQMKGNEVFKIAVNTLSNDVVEILAKNNILAQEIDLFIPHQANLRIIKAVQEKLNLSDEKCVITVQKYGNTSAASIPMAMNDAYEEGRLKKGNLILLDAFGGGFTWGSALLKFGGENF</sequence>
<dbReference type="EC" id="2.3.1.180" evidence="1"/>
<dbReference type="EMBL" id="CP000025">
    <property type="protein sequence ID" value="AAW34962.1"/>
    <property type="molecule type" value="Genomic_DNA"/>
</dbReference>
<dbReference type="RefSeq" id="WP_002869731.1">
    <property type="nucleotide sequence ID" value="NC_003912.7"/>
</dbReference>
<dbReference type="SMR" id="Q5HWE3"/>
<dbReference type="KEGG" id="cjr:CJE0373"/>
<dbReference type="HOGENOM" id="CLU_039592_4_0_7"/>
<dbReference type="UniPathway" id="UPA00094"/>
<dbReference type="GO" id="GO:0005737">
    <property type="term" value="C:cytoplasm"/>
    <property type="evidence" value="ECO:0007669"/>
    <property type="project" value="UniProtKB-SubCell"/>
</dbReference>
<dbReference type="GO" id="GO:0004315">
    <property type="term" value="F:3-oxoacyl-[acyl-carrier-protein] synthase activity"/>
    <property type="evidence" value="ECO:0007669"/>
    <property type="project" value="InterPro"/>
</dbReference>
<dbReference type="GO" id="GO:0033818">
    <property type="term" value="F:beta-ketoacyl-acyl-carrier-protein synthase III activity"/>
    <property type="evidence" value="ECO:0007669"/>
    <property type="project" value="UniProtKB-UniRule"/>
</dbReference>
<dbReference type="GO" id="GO:0006633">
    <property type="term" value="P:fatty acid biosynthetic process"/>
    <property type="evidence" value="ECO:0007669"/>
    <property type="project" value="UniProtKB-UniRule"/>
</dbReference>
<dbReference type="GO" id="GO:0044550">
    <property type="term" value="P:secondary metabolite biosynthetic process"/>
    <property type="evidence" value="ECO:0007669"/>
    <property type="project" value="TreeGrafter"/>
</dbReference>
<dbReference type="CDD" id="cd00830">
    <property type="entry name" value="KAS_III"/>
    <property type="match status" value="1"/>
</dbReference>
<dbReference type="FunFam" id="3.40.47.10:FF:000004">
    <property type="entry name" value="3-oxoacyl-[acyl-carrier-protein] synthase 3"/>
    <property type="match status" value="1"/>
</dbReference>
<dbReference type="Gene3D" id="3.40.47.10">
    <property type="match status" value="1"/>
</dbReference>
<dbReference type="HAMAP" id="MF_01815">
    <property type="entry name" value="FabH"/>
    <property type="match status" value="1"/>
</dbReference>
<dbReference type="InterPro" id="IPR013747">
    <property type="entry name" value="ACP_syn_III_C"/>
</dbReference>
<dbReference type="InterPro" id="IPR013751">
    <property type="entry name" value="ACP_syn_III_N"/>
</dbReference>
<dbReference type="InterPro" id="IPR004655">
    <property type="entry name" value="FabH"/>
</dbReference>
<dbReference type="InterPro" id="IPR016039">
    <property type="entry name" value="Thiolase-like"/>
</dbReference>
<dbReference type="NCBIfam" id="TIGR00747">
    <property type="entry name" value="fabH"/>
    <property type="match status" value="1"/>
</dbReference>
<dbReference type="NCBIfam" id="NF006829">
    <property type="entry name" value="PRK09352.1"/>
    <property type="match status" value="1"/>
</dbReference>
<dbReference type="PANTHER" id="PTHR34069">
    <property type="entry name" value="3-OXOACYL-[ACYL-CARRIER-PROTEIN] SYNTHASE 3"/>
    <property type="match status" value="1"/>
</dbReference>
<dbReference type="PANTHER" id="PTHR34069:SF2">
    <property type="entry name" value="BETA-KETOACYL-[ACYL-CARRIER-PROTEIN] SYNTHASE III"/>
    <property type="match status" value="1"/>
</dbReference>
<dbReference type="Pfam" id="PF08545">
    <property type="entry name" value="ACP_syn_III"/>
    <property type="match status" value="1"/>
</dbReference>
<dbReference type="Pfam" id="PF08541">
    <property type="entry name" value="ACP_syn_III_C"/>
    <property type="match status" value="1"/>
</dbReference>
<dbReference type="SUPFAM" id="SSF53901">
    <property type="entry name" value="Thiolase-like"/>
    <property type="match status" value="1"/>
</dbReference>
<proteinExistence type="inferred from homology"/>
<feature type="chain" id="PRO_1000056338" description="Beta-ketoacyl-[acyl-carrier-protein] synthase III">
    <location>
        <begin position="1"/>
        <end position="324"/>
    </location>
</feature>
<feature type="region of interest" description="ACP-binding" evidence="1">
    <location>
        <begin position="247"/>
        <end position="251"/>
    </location>
</feature>
<feature type="active site" evidence="1">
    <location>
        <position position="114"/>
    </location>
</feature>
<feature type="active site" evidence="1">
    <location>
        <position position="246"/>
    </location>
</feature>
<feature type="active site" evidence="1">
    <location>
        <position position="276"/>
    </location>
</feature>
<evidence type="ECO:0000255" key="1">
    <source>
        <dbReference type="HAMAP-Rule" id="MF_01815"/>
    </source>
</evidence>
<name>FABH_CAMJR</name>
<comment type="function">
    <text evidence="1">Catalyzes the condensation reaction of fatty acid synthesis by the addition to an acyl acceptor of two carbons from malonyl-ACP. Catalyzes the first condensation reaction which initiates fatty acid synthesis and may therefore play a role in governing the total rate of fatty acid production. Possesses both acetoacetyl-ACP synthase and acetyl transacylase activities. Its substrate specificity determines the biosynthesis of branched-chain and/or straight-chain of fatty acids.</text>
</comment>
<comment type="catalytic activity">
    <reaction evidence="1">
        <text>malonyl-[ACP] + acetyl-CoA + H(+) = 3-oxobutanoyl-[ACP] + CO2 + CoA</text>
        <dbReference type="Rhea" id="RHEA:12080"/>
        <dbReference type="Rhea" id="RHEA-COMP:9623"/>
        <dbReference type="Rhea" id="RHEA-COMP:9625"/>
        <dbReference type="ChEBI" id="CHEBI:15378"/>
        <dbReference type="ChEBI" id="CHEBI:16526"/>
        <dbReference type="ChEBI" id="CHEBI:57287"/>
        <dbReference type="ChEBI" id="CHEBI:57288"/>
        <dbReference type="ChEBI" id="CHEBI:78449"/>
        <dbReference type="ChEBI" id="CHEBI:78450"/>
        <dbReference type="EC" id="2.3.1.180"/>
    </reaction>
</comment>
<comment type="pathway">
    <text evidence="1">Lipid metabolism; fatty acid biosynthesis.</text>
</comment>
<comment type="subunit">
    <text evidence="1">Homodimer.</text>
</comment>
<comment type="subcellular location">
    <subcellularLocation>
        <location evidence="1">Cytoplasm</location>
    </subcellularLocation>
</comment>
<comment type="domain">
    <text evidence="1">The last Arg residue of the ACP-binding site is essential for the weak association between ACP/AcpP and FabH.</text>
</comment>
<comment type="similarity">
    <text evidence="1">Belongs to the thiolase-like superfamily. FabH family.</text>
</comment>